<proteinExistence type="evidence at transcript level"/>
<dbReference type="EMBL" id="AF314590">
    <property type="protein sequence ID" value="AAM47035.1"/>
    <property type="status" value="ALT_INIT"/>
    <property type="molecule type" value="Genomic_DNA"/>
</dbReference>
<dbReference type="SMR" id="Q8KY07"/>
<dbReference type="STRING" id="375.BKD09_RS10715"/>
<dbReference type="eggNOG" id="COG3043">
    <property type="taxonomic scope" value="Bacteria"/>
</dbReference>
<dbReference type="GO" id="GO:0042597">
    <property type="term" value="C:periplasmic space"/>
    <property type="evidence" value="ECO:0007669"/>
    <property type="project" value="UniProtKB-SubCell"/>
</dbReference>
<dbReference type="GO" id="GO:0046872">
    <property type="term" value="F:metal ion binding"/>
    <property type="evidence" value="ECO:0007669"/>
    <property type="project" value="UniProtKB-KW"/>
</dbReference>
<dbReference type="GO" id="GO:0009061">
    <property type="term" value="P:anaerobic respiration"/>
    <property type="evidence" value="ECO:0007669"/>
    <property type="project" value="InterPro"/>
</dbReference>
<dbReference type="FunFam" id="1.10.1130.10:FF:000001">
    <property type="entry name" value="Periplasmic nitrate reductase, electron transfer subunit"/>
    <property type="match status" value="1"/>
</dbReference>
<dbReference type="Gene3D" id="1.10.1130.10">
    <property type="entry name" value="Flavocytochrome C3, Chain A"/>
    <property type="match status" value="1"/>
</dbReference>
<dbReference type="InterPro" id="IPR036280">
    <property type="entry name" value="Multihaem_cyt_sf"/>
</dbReference>
<dbReference type="InterPro" id="IPR005591">
    <property type="entry name" value="NapB"/>
</dbReference>
<dbReference type="PANTHER" id="PTHR38604">
    <property type="entry name" value="PERIPLASMIC NITRATE REDUCTASE, ELECTRON TRANSFER SUBUNIT"/>
    <property type="match status" value="1"/>
</dbReference>
<dbReference type="PANTHER" id="PTHR38604:SF1">
    <property type="entry name" value="PERIPLASMIC NITRATE REDUCTASE, ELECTRON TRANSFER SUBUNIT"/>
    <property type="match status" value="1"/>
</dbReference>
<dbReference type="Pfam" id="PF03892">
    <property type="entry name" value="NapB"/>
    <property type="match status" value="1"/>
</dbReference>
<dbReference type="PIRSF" id="PIRSF006105">
    <property type="entry name" value="NapB"/>
    <property type="match status" value="1"/>
</dbReference>
<dbReference type="SUPFAM" id="SSF48695">
    <property type="entry name" value="Multiheme cytochromes"/>
    <property type="match status" value="1"/>
</dbReference>
<dbReference type="PROSITE" id="PS51008">
    <property type="entry name" value="MULTIHEME_CYTC"/>
    <property type="match status" value="1"/>
</dbReference>
<gene>
    <name evidence="7" type="primary">napB</name>
</gene>
<accession>Q8KY07</accession>
<feature type="signal peptide" evidence="3">
    <location>
        <begin position="1"/>
        <end position="34"/>
    </location>
</feature>
<feature type="chain" id="PRO_0000417029" description="Periplasmic nitrate reductase, electron transfer subunit">
    <location>
        <begin position="35"/>
        <end position="167"/>
    </location>
</feature>
<feature type="region of interest" description="Disordered" evidence="4">
    <location>
        <begin position="40"/>
        <end position="65"/>
    </location>
</feature>
<feature type="binding site" description="axial binding residue" evidence="2">
    <location>
        <position position="79"/>
    </location>
    <ligand>
        <name>heme c</name>
        <dbReference type="ChEBI" id="CHEBI:61717"/>
        <label>1</label>
    </ligand>
    <ligandPart>
        <name>Fe</name>
        <dbReference type="ChEBI" id="CHEBI:18248"/>
    </ligandPart>
</feature>
<feature type="binding site" description="covalent" evidence="2">
    <location>
        <position position="93"/>
    </location>
    <ligand>
        <name>heme c</name>
        <dbReference type="ChEBI" id="CHEBI:61717"/>
        <label>1</label>
    </ligand>
</feature>
<feature type="binding site" description="covalent" evidence="2">
    <location>
        <position position="96"/>
    </location>
    <ligand>
        <name>heme c</name>
        <dbReference type="ChEBI" id="CHEBI:61717"/>
        <label>1</label>
    </ligand>
</feature>
<feature type="binding site" description="axial binding residue" evidence="2">
    <location>
        <position position="97"/>
    </location>
    <ligand>
        <name>heme c</name>
        <dbReference type="ChEBI" id="CHEBI:61717"/>
        <label>1</label>
    </ligand>
    <ligandPart>
        <name>Fe</name>
        <dbReference type="ChEBI" id="CHEBI:18248"/>
    </ligandPart>
</feature>
<feature type="binding site" description="axial binding residue" evidence="2">
    <location>
        <position position="114"/>
    </location>
    <ligand>
        <name>heme c</name>
        <dbReference type="ChEBI" id="CHEBI:61717"/>
        <label>2</label>
    </ligand>
    <ligandPart>
        <name>Fe</name>
        <dbReference type="ChEBI" id="CHEBI:18248"/>
    </ligandPart>
</feature>
<feature type="binding site" description="covalent" evidence="2">
    <location>
        <position position="133"/>
    </location>
    <ligand>
        <name>heme c</name>
        <dbReference type="ChEBI" id="CHEBI:61717"/>
        <label>2</label>
    </ligand>
</feature>
<feature type="binding site" description="covalent" evidence="2">
    <location>
        <position position="136"/>
    </location>
    <ligand>
        <name>heme c</name>
        <dbReference type="ChEBI" id="CHEBI:61717"/>
        <label>2</label>
    </ligand>
</feature>
<feature type="binding site" description="axial binding residue" evidence="2">
    <location>
        <position position="137"/>
    </location>
    <ligand>
        <name>heme c</name>
        <dbReference type="ChEBI" id="CHEBI:61717"/>
        <label>2</label>
    </ligand>
    <ligandPart>
        <name>Fe</name>
        <dbReference type="ChEBI" id="CHEBI:18248"/>
    </ligandPart>
</feature>
<reference evidence="6 7" key="1">
    <citation type="journal article" date="2003" name="Microbiology">
        <title>The Bradyrhizobium japonicum napEDABC genes encoding the periplasmic nitrate reductase are essential for nitrate respiration.</title>
        <authorList>
            <person name="Delgado M."/>
            <person name="Bonnard N."/>
            <person name="Tresierra-Ayala A."/>
            <person name="Bedmar E.J."/>
            <person name="Muller P."/>
        </authorList>
    </citation>
    <scope>NUCLEOTIDE SEQUENCE [GENOMIC DNA]</scope>
    <scope>FUNCTION</scope>
    <scope>SUBCELLULAR LOCATION</scope>
    <scope>INDUCTION</scope>
    <scope>PTM</scope>
    <source>
        <strain evidence="7">USDA 110spc4</strain>
    </source>
</reference>
<comment type="function">
    <text evidence="5">Electron transfer subunit of the periplasmic nitrate reductase complex NapAB. Receives electrons from the membrane-anchored tetraheme c-type NapC protein and transfers these to NapA subunit, thus allowing electron flow between membrane and periplasm. Essential for periplasmic nitrate reduction with nitrate as the terminal electron acceptor.</text>
</comment>
<comment type="subunit">
    <text evidence="1">Component of the periplasmic nitrate reductase NapAB complex composed of NapA and NapB.</text>
</comment>
<comment type="subcellular location">
    <subcellularLocation>
        <location evidence="5">Periplasm</location>
    </subcellularLocation>
</comment>
<comment type="induction">
    <text evidence="5">Induced by anaerobic conditions, and further induced by presence of nitrate.</text>
</comment>
<comment type="PTM">
    <text evidence="5">Binds 2 heme C groups per subunit.</text>
</comment>
<comment type="similarity">
    <text evidence="3">Belongs to the NapB family.</text>
</comment>
<comment type="sequence caution" evidence="6">
    <conflict type="erroneous initiation">
        <sequence resource="EMBL-CDS" id="AAM47035"/>
    </conflict>
    <text>Truncated N-terminus.</text>
</comment>
<protein>
    <recommendedName>
        <fullName>Periplasmic nitrate reductase, electron transfer subunit</fullName>
    </recommendedName>
    <alternativeName>
        <fullName evidence="1">Diheme cytochrome c NapB</fullName>
    </alternativeName>
</protein>
<keyword id="KW-0249">Electron transport</keyword>
<keyword id="KW-0349">Heme</keyword>
<keyword id="KW-0408">Iron</keyword>
<keyword id="KW-0479">Metal-binding</keyword>
<keyword id="KW-0574">Periplasm</keyword>
<keyword id="KW-0732">Signal</keyword>
<keyword id="KW-0813">Transport</keyword>
<name>NAPB_BRAJP</name>
<evidence type="ECO:0000250" key="1">
    <source>
        <dbReference type="UniProtKB" id="P39186"/>
    </source>
</evidence>
<evidence type="ECO:0000250" key="2">
    <source>
        <dbReference type="UniProtKB" id="P44654"/>
    </source>
</evidence>
<evidence type="ECO:0000255" key="3"/>
<evidence type="ECO:0000256" key="4">
    <source>
        <dbReference type="SAM" id="MobiDB-lite"/>
    </source>
</evidence>
<evidence type="ECO:0000269" key="5">
    <source>
    </source>
</evidence>
<evidence type="ECO:0000305" key="6"/>
<evidence type="ECO:0000312" key="7">
    <source>
        <dbReference type="EMBL" id="AAM47035.1"/>
    </source>
</evidence>
<sequence>MRRAHRAGERVMMKRFGIALLAVAIAAGASSLTAQTVTSGLHGPAPLNDEGPAPPMLPNRNTSEREVRNYPEQPPVIPHTIDGYQVDLNGNKCLSCHARARTAESQAPMVSITHFMDRDGQFWPSISPRRFFCTECHVPQNTATPPVSNDFTDIDTLLSRASPGGRR</sequence>
<organism>
    <name type="scientific">Bradyrhizobium japonicum</name>
    <dbReference type="NCBI Taxonomy" id="375"/>
    <lineage>
        <taxon>Bacteria</taxon>
        <taxon>Pseudomonadati</taxon>
        <taxon>Pseudomonadota</taxon>
        <taxon>Alphaproteobacteria</taxon>
        <taxon>Hyphomicrobiales</taxon>
        <taxon>Nitrobacteraceae</taxon>
        <taxon>Bradyrhizobium</taxon>
    </lineage>
</organism>